<keyword id="KW-0963">Cytoplasm</keyword>
<keyword id="KW-1185">Reference proteome</keyword>
<keyword id="KW-0346">Stress response</keyword>
<feature type="chain" id="PRO_0000315301" description="Heat shock protein HspQ">
    <location>
        <begin position="1"/>
        <end position="105"/>
    </location>
</feature>
<feature type="region of interest" description="Disordered" evidence="2">
    <location>
        <begin position="74"/>
        <end position="105"/>
    </location>
</feature>
<name>HSPQ_CITK8</name>
<reference key="1">
    <citation type="submission" date="2007-08" db="EMBL/GenBank/DDBJ databases">
        <authorList>
            <consortium name="The Citrobacter koseri Genome Sequencing Project"/>
            <person name="McClelland M."/>
            <person name="Sanderson E.K."/>
            <person name="Porwollik S."/>
            <person name="Spieth J."/>
            <person name="Clifton W.S."/>
            <person name="Latreille P."/>
            <person name="Courtney L."/>
            <person name="Wang C."/>
            <person name="Pepin K."/>
            <person name="Bhonagiri V."/>
            <person name="Nash W."/>
            <person name="Johnson M."/>
            <person name="Thiruvilangam P."/>
            <person name="Wilson R."/>
        </authorList>
    </citation>
    <scope>NUCLEOTIDE SEQUENCE [LARGE SCALE GENOMIC DNA]</scope>
    <source>
        <strain>ATCC BAA-895 / CDC 4225-83 / SGSC4696</strain>
    </source>
</reference>
<protein>
    <recommendedName>
        <fullName evidence="1">Heat shock protein HspQ</fullName>
    </recommendedName>
</protein>
<gene>
    <name evidence="1" type="primary">hspQ</name>
    <name type="ordered locus">CKO_02100</name>
</gene>
<accession>A8AIB1</accession>
<dbReference type="EMBL" id="CP000822">
    <property type="protein sequence ID" value="ABV13224.1"/>
    <property type="molecule type" value="Genomic_DNA"/>
</dbReference>
<dbReference type="RefSeq" id="WP_012132956.1">
    <property type="nucleotide sequence ID" value="NC_009792.1"/>
</dbReference>
<dbReference type="SMR" id="A8AIB1"/>
<dbReference type="STRING" id="290338.CKO_02100"/>
<dbReference type="GeneID" id="45136049"/>
<dbReference type="KEGG" id="cko:CKO_02100"/>
<dbReference type="HOGENOM" id="CLU_123865_1_0_6"/>
<dbReference type="OrthoDB" id="9806050at2"/>
<dbReference type="Proteomes" id="UP000008148">
    <property type="component" value="Chromosome"/>
</dbReference>
<dbReference type="GO" id="GO:0005737">
    <property type="term" value="C:cytoplasm"/>
    <property type="evidence" value="ECO:0007669"/>
    <property type="project" value="UniProtKB-SubCell"/>
</dbReference>
<dbReference type="GO" id="GO:0003677">
    <property type="term" value="F:DNA binding"/>
    <property type="evidence" value="ECO:0007669"/>
    <property type="project" value="InterPro"/>
</dbReference>
<dbReference type="GO" id="GO:0009408">
    <property type="term" value="P:response to heat"/>
    <property type="evidence" value="ECO:0007669"/>
    <property type="project" value="UniProtKB-UniRule"/>
</dbReference>
<dbReference type="Gene3D" id="2.30.30.390">
    <property type="entry name" value="Hemimethylated DNA-binding domain"/>
    <property type="match status" value="1"/>
</dbReference>
<dbReference type="HAMAP" id="MF_01194">
    <property type="entry name" value="HspQ"/>
    <property type="match status" value="1"/>
</dbReference>
<dbReference type="InterPro" id="IPR011722">
    <property type="entry name" value="Hemimethylated_DNA-bd_dom"/>
</dbReference>
<dbReference type="InterPro" id="IPR036623">
    <property type="entry name" value="Hemimethylated_DNA-bd_sf"/>
</dbReference>
<dbReference type="InterPro" id="IPR022866">
    <property type="entry name" value="HspQ"/>
</dbReference>
<dbReference type="NCBIfam" id="NF010729">
    <property type="entry name" value="PRK14129.1"/>
    <property type="match status" value="1"/>
</dbReference>
<dbReference type="NCBIfam" id="TIGR02097">
    <property type="entry name" value="yccV"/>
    <property type="match status" value="1"/>
</dbReference>
<dbReference type="Pfam" id="PF08755">
    <property type="entry name" value="YccV-like"/>
    <property type="match status" value="1"/>
</dbReference>
<dbReference type="SMART" id="SM00992">
    <property type="entry name" value="YccV-like"/>
    <property type="match status" value="1"/>
</dbReference>
<dbReference type="SUPFAM" id="SSF141255">
    <property type="entry name" value="YccV-like"/>
    <property type="match status" value="1"/>
</dbReference>
<sequence length="105" mass="11883">MIASKFGIGQQVRHSLLGYLGVVVDIDPEYSLDEPSPDELAVNDELRAAPWYHVVMEDDEGQPVHTYLAEAQLSSETQDEHPEQPSMDELARTIRKQLQAPRLRN</sequence>
<evidence type="ECO:0000255" key="1">
    <source>
        <dbReference type="HAMAP-Rule" id="MF_01194"/>
    </source>
</evidence>
<evidence type="ECO:0000256" key="2">
    <source>
        <dbReference type="SAM" id="MobiDB-lite"/>
    </source>
</evidence>
<proteinExistence type="inferred from homology"/>
<organism>
    <name type="scientific">Citrobacter koseri (strain ATCC BAA-895 / CDC 4225-83 / SGSC4696)</name>
    <dbReference type="NCBI Taxonomy" id="290338"/>
    <lineage>
        <taxon>Bacteria</taxon>
        <taxon>Pseudomonadati</taxon>
        <taxon>Pseudomonadota</taxon>
        <taxon>Gammaproteobacteria</taxon>
        <taxon>Enterobacterales</taxon>
        <taxon>Enterobacteriaceae</taxon>
        <taxon>Citrobacter</taxon>
    </lineage>
</organism>
<comment type="function">
    <text evidence="1">Involved in the degradation of certain denaturated proteins, including DnaA, during heat shock stress.</text>
</comment>
<comment type="subcellular location">
    <subcellularLocation>
        <location evidence="1">Cytoplasm</location>
    </subcellularLocation>
</comment>
<comment type="similarity">
    <text evidence="1">Belongs to the HspQ family.</text>
</comment>